<keyword id="KW-1185">Reference proteome</keyword>
<keyword id="KW-0677">Repeat</keyword>
<keyword id="KW-0853">WD repeat</keyword>
<reference key="1">
    <citation type="journal article" date="2007" name="Proc. Natl. Acad. Sci. U.S.A.">
        <title>Dandruff-associated Malassezia genomes reveal convergent and divergent virulence traits shared with plant and human fungal pathogens.</title>
        <authorList>
            <person name="Xu J."/>
            <person name="Saunders C.W."/>
            <person name="Hu P."/>
            <person name="Grant R.A."/>
            <person name="Boekhout T."/>
            <person name="Kuramae E.E."/>
            <person name="Kronstad J.W."/>
            <person name="DeAngelis Y.M."/>
            <person name="Reeder N.L."/>
            <person name="Johnstone K.R."/>
            <person name="Leland M."/>
            <person name="Fieno A.M."/>
            <person name="Begley W.M."/>
            <person name="Sun Y."/>
            <person name="Lacey M.P."/>
            <person name="Chaudhary T."/>
            <person name="Keough T."/>
            <person name="Chu L."/>
            <person name="Sears R."/>
            <person name="Yuan B."/>
            <person name="Dawson T.L. Jr."/>
        </authorList>
    </citation>
    <scope>NUCLEOTIDE SEQUENCE [LARGE SCALE GENOMIC DNA]</scope>
    <source>
        <strain>ATCC MYA-4612 / CBS 7966</strain>
    </source>
</reference>
<name>CIAO1_MALGO</name>
<evidence type="ECO:0000255" key="1">
    <source>
        <dbReference type="HAMAP-Rule" id="MF_03037"/>
    </source>
</evidence>
<protein>
    <recommendedName>
        <fullName evidence="1">Probable cytosolic iron-sulfur protein assembly protein 1</fullName>
    </recommendedName>
</protein>
<organism>
    <name type="scientific">Malassezia globosa (strain ATCC MYA-4612 / CBS 7966)</name>
    <name type="common">Dandruff-associated fungus</name>
    <dbReference type="NCBI Taxonomy" id="425265"/>
    <lineage>
        <taxon>Eukaryota</taxon>
        <taxon>Fungi</taxon>
        <taxon>Dikarya</taxon>
        <taxon>Basidiomycota</taxon>
        <taxon>Ustilaginomycotina</taxon>
        <taxon>Malasseziomycetes</taxon>
        <taxon>Malasseziales</taxon>
        <taxon>Malasseziaceae</taxon>
        <taxon>Malassezia</taxon>
    </lineage>
</organism>
<proteinExistence type="inferred from homology"/>
<dbReference type="EMBL" id="AAYY01000003">
    <property type="protein sequence ID" value="EDP44703.1"/>
    <property type="molecule type" value="Genomic_DNA"/>
</dbReference>
<dbReference type="RefSeq" id="XP_001731917.1">
    <property type="nucleotide sequence ID" value="XM_001731865.1"/>
</dbReference>
<dbReference type="SMR" id="A8PWQ8"/>
<dbReference type="STRING" id="425265.A8PWQ8"/>
<dbReference type="GeneID" id="5856222"/>
<dbReference type="KEGG" id="mgl:MGL_1185"/>
<dbReference type="VEuPathDB" id="FungiDB:MGL_1185"/>
<dbReference type="InParanoid" id="A8PWQ8"/>
<dbReference type="OMA" id="IREIRWS"/>
<dbReference type="OrthoDB" id="284782at2759"/>
<dbReference type="Proteomes" id="UP000008837">
    <property type="component" value="Unassembled WGS sequence"/>
</dbReference>
<dbReference type="GO" id="GO:0097361">
    <property type="term" value="C:cytosolic [4Fe-4S] assembly targeting complex"/>
    <property type="evidence" value="ECO:0007669"/>
    <property type="project" value="InterPro"/>
</dbReference>
<dbReference type="GO" id="GO:0016226">
    <property type="term" value="P:iron-sulfur cluster assembly"/>
    <property type="evidence" value="ECO:0007669"/>
    <property type="project" value="UniProtKB-UniRule"/>
</dbReference>
<dbReference type="CDD" id="cd00200">
    <property type="entry name" value="WD40"/>
    <property type="match status" value="1"/>
</dbReference>
<dbReference type="Gene3D" id="2.130.10.10">
    <property type="entry name" value="YVTN repeat-like/Quinoprotein amine dehydrogenase"/>
    <property type="match status" value="1"/>
</dbReference>
<dbReference type="HAMAP" id="MF_03037">
    <property type="entry name" value="ciao1"/>
    <property type="match status" value="1"/>
</dbReference>
<dbReference type="InterPro" id="IPR028608">
    <property type="entry name" value="CIAO1/Cia1"/>
</dbReference>
<dbReference type="InterPro" id="IPR015943">
    <property type="entry name" value="WD40/YVTN_repeat-like_dom_sf"/>
</dbReference>
<dbReference type="InterPro" id="IPR036322">
    <property type="entry name" value="WD40_repeat_dom_sf"/>
</dbReference>
<dbReference type="InterPro" id="IPR001680">
    <property type="entry name" value="WD40_rpt"/>
</dbReference>
<dbReference type="PANTHER" id="PTHR19920:SF0">
    <property type="entry name" value="CYTOSOLIC IRON-SULFUR PROTEIN ASSEMBLY PROTEIN CIAO1-RELATED"/>
    <property type="match status" value="1"/>
</dbReference>
<dbReference type="PANTHER" id="PTHR19920">
    <property type="entry name" value="WD40 PROTEIN CIAO1"/>
    <property type="match status" value="1"/>
</dbReference>
<dbReference type="Pfam" id="PF00400">
    <property type="entry name" value="WD40"/>
    <property type="match status" value="6"/>
</dbReference>
<dbReference type="SMART" id="SM00320">
    <property type="entry name" value="WD40"/>
    <property type="match status" value="6"/>
</dbReference>
<dbReference type="SUPFAM" id="SSF50978">
    <property type="entry name" value="WD40 repeat-like"/>
    <property type="match status" value="1"/>
</dbReference>
<dbReference type="PROSITE" id="PS00678">
    <property type="entry name" value="WD_REPEATS_1"/>
    <property type="match status" value="1"/>
</dbReference>
<dbReference type="PROSITE" id="PS50082">
    <property type="entry name" value="WD_REPEATS_2"/>
    <property type="match status" value="5"/>
</dbReference>
<dbReference type="PROSITE" id="PS50294">
    <property type="entry name" value="WD_REPEATS_REGION"/>
    <property type="match status" value="1"/>
</dbReference>
<accession>A8PWQ8</accession>
<sequence length="356" mass="39156">MSQQNTVEGGFDLSSGVSDKKEWVFNLQEVIPTGHKRTVRSVAWSPNGEVLATASFDSTVGLWERIPENIRAEEGSDGPEWECFGTLEGHDSECKSVAFSYNGNLLASCGRDKSVWVWEAQPDADYECIGVLIEHSQDVKCVIWHPKEEILASASYDNTIKMYVDDPSCDWYCYTTLQAHSSTVWSLSFSPCGQFLASSSDDMTIWIWRRVSAAECVELGIQAHGNTPGRSGERWVPTYCIQGHFSGPIFSVNWAPGDSFDPRQALGKLVAAGADGKIIVFFLVRIYATLRGTYACAQSLEDNNPSRIFVHVGAQEENAHGSVDVNCVKWAPMNTDGSAPTMIASAGDDGEIRIWT</sequence>
<comment type="function">
    <text evidence="1">Essential component of the cytosolic iron-sulfur (Fe/S) protein assembly machinery. Required for the maturation of extramitochondrial Fe/S proteins.</text>
</comment>
<comment type="similarity">
    <text evidence="1">Belongs to the WD repeat CIA1 family.</text>
</comment>
<gene>
    <name evidence="1" type="primary">CIA1</name>
    <name type="ORF">MGL_1185</name>
</gene>
<feature type="chain" id="PRO_0000382519" description="Probable cytosolic iron-sulfur protein assembly protein 1">
    <location>
        <begin position="1"/>
        <end position="356"/>
    </location>
</feature>
<feature type="repeat" description="WD 1">
    <location>
        <begin position="34"/>
        <end position="73"/>
    </location>
</feature>
<feature type="repeat" description="WD 2">
    <location>
        <begin position="89"/>
        <end position="128"/>
    </location>
</feature>
<feature type="repeat" description="WD 3">
    <location>
        <begin position="134"/>
        <end position="173"/>
    </location>
</feature>
<feature type="repeat" description="WD 4">
    <location>
        <begin position="179"/>
        <end position="218"/>
    </location>
</feature>
<feature type="repeat" description="WD 5">
    <location>
        <begin position="244"/>
        <end position="291"/>
    </location>
</feature>
<feature type="repeat" description="WD 6">
    <location>
        <begin position="319"/>
        <end position="356"/>
    </location>
</feature>